<feature type="chain" id="PRO_1000065446" description="Holin-like protein CidA">
    <location>
        <begin position="1"/>
        <end position="121"/>
    </location>
</feature>
<feature type="transmembrane region" description="Helical" evidence="1">
    <location>
        <begin position="3"/>
        <end position="23"/>
    </location>
</feature>
<feature type="transmembrane region" description="Helical" evidence="1">
    <location>
        <begin position="30"/>
        <end position="50"/>
    </location>
</feature>
<feature type="transmembrane region" description="Helical" evidence="1">
    <location>
        <begin position="58"/>
        <end position="78"/>
    </location>
</feature>
<feature type="transmembrane region" description="Helical" evidence="1">
    <location>
        <begin position="89"/>
        <end position="109"/>
    </location>
</feature>
<proteinExistence type="inferred from homology"/>
<accession>Q733F5</accession>
<reference key="1">
    <citation type="journal article" date="2004" name="Nucleic Acids Res.">
        <title>The genome sequence of Bacillus cereus ATCC 10987 reveals metabolic adaptations and a large plasmid related to Bacillus anthracis pXO1.</title>
        <authorList>
            <person name="Rasko D.A."/>
            <person name="Ravel J."/>
            <person name="Oekstad O.A."/>
            <person name="Helgason E."/>
            <person name="Cer R.Z."/>
            <person name="Jiang L."/>
            <person name="Shores K.A."/>
            <person name="Fouts D.E."/>
            <person name="Tourasse N.J."/>
            <person name="Angiuoli S.V."/>
            <person name="Kolonay J.F."/>
            <person name="Nelson W.C."/>
            <person name="Kolstoe A.-B."/>
            <person name="Fraser C.M."/>
            <person name="Read T.D."/>
        </authorList>
    </citation>
    <scope>NUCLEOTIDE SEQUENCE [LARGE SCALE GENOMIC DNA]</scope>
    <source>
        <strain>ATCC 10987 / NRS 248</strain>
    </source>
</reference>
<protein>
    <recommendedName>
        <fullName evidence="1">Holin-like protein CidA</fullName>
    </recommendedName>
</protein>
<name>CIDA_BACC1</name>
<comment type="function">
    <text evidence="1">Increases the activity of extracellular murein hydrolases possibly by mediating their export via hole formation. Inhibited by the antiholin-like proteins LrgAB. In an unstressed cell, the LrgAB products probably inhibit the function of the CidA protein. When a cell is stressed by the addition of antibiotics or by other factors in the environment, CidA possibly oligomerizes within the bacterial cell membrane, creating lesions that disrupt the proton motive force, which in turn results in loss of cell viability. These lesions are also hypothesized to regulate the subsequent cell lysis by either allowing the murein hydrolases access to the cell wall substrate and/or regulating their activity by a possible change in the cell wall pH that results from loss of membrane potential.</text>
</comment>
<comment type="subcellular location">
    <subcellularLocation>
        <location evidence="1">Cell membrane</location>
        <topology evidence="1">Multi-pass membrane protein</topology>
    </subcellularLocation>
</comment>
<comment type="similarity">
    <text evidence="1">Belongs to the CidA/LrgA family. CidA subfamily.</text>
</comment>
<sequence>MKWWKLSGQILLLFCFAWTGEWIAKQAHLPVPGSIIGIFLLLISLKFNLVKKEWIQDGADFLLKELILFFIPSAVAVIRYKDTLSQYGIDLILIIMISTLCVTLVTGLLTELLLKRKGSVQ</sequence>
<evidence type="ECO:0000255" key="1">
    <source>
        <dbReference type="HAMAP-Rule" id="MF_01143"/>
    </source>
</evidence>
<organism>
    <name type="scientific">Bacillus cereus (strain ATCC 10987 / NRS 248)</name>
    <dbReference type="NCBI Taxonomy" id="222523"/>
    <lineage>
        <taxon>Bacteria</taxon>
        <taxon>Bacillati</taxon>
        <taxon>Bacillota</taxon>
        <taxon>Bacilli</taxon>
        <taxon>Bacillales</taxon>
        <taxon>Bacillaceae</taxon>
        <taxon>Bacillus</taxon>
        <taxon>Bacillus cereus group</taxon>
    </lineage>
</organism>
<dbReference type="EMBL" id="AE017194">
    <property type="protein sequence ID" value="AAS42608.1"/>
    <property type="molecule type" value="Genomic_DNA"/>
</dbReference>
<dbReference type="SMR" id="Q733F5"/>
<dbReference type="KEGG" id="bca:BCE_3703"/>
<dbReference type="HOGENOM" id="CLU_113736_3_2_9"/>
<dbReference type="Proteomes" id="UP000002527">
    <property type="component" value="Chromosome"/>
</dbReference>
<dbReference type="GO" id="GO:0005886">
    <property type="term" value="C:plasma membrane"/>
    <property type="evidence" value="ECO:0007669"/>
    <property type="project" value="UniProtKB-SubCell"/>
</dbReference>
<dbReference type="GO" id="GO:0019835">
    <property type="term" value="P:cytolysis"/>
    <property type="evidence" value="ECO:0007669"/>
    <property type="project" value="UniProtKB-UniRule"/>
</dbReference>
<dbReference type="GO" id="GO:0031640">
    <property type="term" value="P:killing of cells of another organism"/>
    <property type="evidence" value="ECO:0007669"/>
    <property type="project" value="UniProtKB-KW"/>
</dbReference>
<dbReference type="GO" id="GO:0012501">
    <property type="term" value="P:programmed cell death"/>
    <property type="evidence" value="ECO:0007669"/>
    <property type="project" value="UniProtKB-UniRule"/>
</dbReference>
<dbReference type="HAMAP" id="MF_01143">
    <property type="entry name" value="CidA"/>
    <property type="match status" value="1"/>
</dbReference>
<dbReference type="InterPro" id="IPR023760">
    <property type="entry name" value="Holin-like_CidA"/>
</dbReference>
<dbReference type="InterPro" id="IPR005538">
    <property type="entry name" value="LrgA/CidA"/>
</dbReference>
<dbReference type="NCBIfam" id="NF002460">
    <property type="entry name" value="PRK01658.1"/>
    <property type="match status" value="1"/>
</dbReference>
<dbReference type="PANTHER" id="PTHR33931:SF2">
    <property type="entry name" value="HOLIN-LIKE PROTEIN CIDA"/>
    <property type="match status" value="1"/>
</dbReference>
<dbReference type="PANTHER" id="PTHR33931">
    <property type="entry name" value="HOLIN-LIKE PROTEIN CIDA-RELATED"/>
    <property type="match status" value="1"/>
</dbReference>
<dbReference type="Pfam" id="PF03788">
    <property type="entry name" value="LrgA"/>
    <property type="match status" value="1"/>
</dbReference>
<keyword id="KW-1003">Cell membrane</keyword>
<keyword id="KW-0204">Cytolysis</keyword>
<keyword id="KW-0472">Membrane</keyword>
<keyword id="KW-0812">Transmembrane</keyword>
<keyword id="KW-1133">Transmembrane helix</keyword>
<gene>
    <name evidence="1" type="primary">cidA</name>
    <name type="ordered locus">BCE_3703</name>
</gene>